<proteinExistence type="inferred from homology"/>
<sequence>MSLSKIIPSNKKEEQKSINAIFNSIDKSEGIIFNSGAGAGKTYALIESLKYIIRNYEKSLKQHNQQIICITYTNVATKEVKERLGNTDLVLVSTIHERMWGLIKDYQKELVEIHKEKLEDEISSLKQKLEKGQGYEKFQELEEDLKGNFKKIMIENRELFFQNYSAKAAEVKKSFKILLNDYPNMLKNVGNFKRIVNAIYKLDQYSKCYENISLNKQGYKSVEYNSIYNNDQLYKMRISHDTLLDYGLKIIKKYDLLKQIIIDKYPFIFIDEYQDTDEKVILIMSYLEQYAKKIDHKIFIGYFGDTAQNIYDDGVGSEITKIHSGLKQIDKVFNRRSTKEVIEVINKIRNDSIEQISIYDDCEGGSVKFYKGTSGNVKDLIERYIYEWKITTENQLHCLVLTNKIVAEYSGFKNIYEAFKETDKYKGSNYNQLNTELLSNDLSKLGEIPKLLFNIVRLQNNLVDKTTSVIDITPKESLFDEMSIEGLRNLIKLLKQYQGKTLGEYIESISTVYSQVNDENYKKIIDWTFGFENITFELFKNHLIEKLFNNILDDDVDRATATIQKILEVDIVEYGLWYKFIMDKQEEKVIYHTYHGTKGREFDNVIIIMENAFGRNHNYFNFFFENFLHPDVLEGEKKLNFEKIKNLLYVSCSRAIKNLRVLYIDDVTDFESEIKEMFGEVYPF</sequence>
<evidence type="ECO:0000250" key="1">
    <source>
        <dbReference type="UniProtKB" id="J8HQ06"/>
    </source>
</evidence>
<evidence type="ECO:0000255" key="2">
    <source>
        <dbReference type="PROSITE-ProRule" id="PRU00560"/>
    </source>
</evidence>
<evidence type="ECO:0000269" key="3">
    <source>
    </source>
</evidence>
<evidence type="ECO:0000303" key="4">
    <source>
    </source>
</evidence>
<evidence type="ECO:0000305" key="5"/>
<evidence type="ECO:0000305" key="6">
    <source>
    </source>
</evidence>
<keyword id="KW-0051">Antiviral defense</keyword>
<keyword id="KW-0067">ATP-binding</keyword>
<keyword id="KW-0347">Helicase</keyword>
<keyword id="KW-0945">Host-virus interaction</keyword>
<keyword id="KW-0378">Hydrolase</keyword>
<keyword id="KW-0547">Nucleotide-binding</keyword>
<protein>
    <recommendedName>
        <fullName evidence="4">Gabija protein GajB</fullName>
    </recommendedName>
    <alternativeName>
        <fullName evidence="4">Putative helicase GajB</fullName>
    </alternativeName>
</protein>
<feature type="chain" id="PRO_0000456382" description="Gabija protein GajB">
    <location>
        <begin position="1"/>
        <end position="684"/>
    </location>
</feature>
<feature type="domain" description="UvrD-like helicase ATP-binding" evidence="2">
    <location>
        <begin position="14"/>
        <end position="351"/>
    </location>
</feature>
<feature type="binding site" evidence="2">
    <location>
        <begin position="35"/>
        <end position="42"/>
    </location>
    <ligand>
        <name>ATP</name>
        <dbReference type="ChEBI" id="CHEBI:30616"/>
    </ligand>
</feature>
<feature type="site" description="Interaction with GajA" evidence="1">
    <location>
        <position position="256"/>
    </location>
</feature>
<feature type="site" description="Interaction with GajA" evidence="1">
    <location>
        <position position="259"/>
    </location>
</feature>
<accession>P0DW48</accession>
<dbReference type="EMBL" id="JH792120">
    <property type="protein sequence ID" value="EJQ91275.1"/>
    <property type="molecule type" value="Genomic_DNA"/>
</dbReference>
<dbReference type="GO" id="GO:0005829">
    <property type="term" value="C:cytosol"/>
    <property type="evidence" value="ECO:0007669"/>
    <property type="project" value="TreeGrafter"/>
</dbReference>
<dbReference type="GO" id="GO:0043138">
    <property type="term" value="F:3'-5' DNA helicase activity"/>
    <property type="evidence" value="ECO:0007669"/>
    <property type="project" value="TreeGrafter"/>
</dbReference>
<dbReference type="GO" id="GO:0005524">
    <property type="term" value="F:ATP binding"/>
    <property type="evidence" value="ECO:0007669"/>
    <property type="project" value="UniProtKB-KW"/>
</dbReference>
<dbReference type="GO" id="GO:0003677">
    <property type="term" value="F:DNA binding"/>
    <property type="evidence" value="ECO:0007669"/>
    <property type="project" value="InterPro"/>
</dbReference>
<dbReference type="GO" id="GO:0016787">
    <property type="term" value="F:hydrolase activity"/>
    <property type="evidence" value="ECO:0007669"/>
    <property type="project" value="UniProtKB-KW"/>
</dbReference>
<dbReference type="GO" id="GO:0051607">
    <property type="term" value="P:defense response to virus"/>
    <property type="evidence" value="ECO:0007669"/>
    <property type="project" value="UniProtKB-KW"/>
</dbReference>
<dbReference type="GO" id="GO:0000725">
    <property type="term" value="P:recombinational repair"/>
    <property type="evidence" value="ECO:0007669"/>
    <property type="project" value="TreeGrafter"/>
</dbReference>
<dbReference type="Gene3D" id="1.10.10.160">
    <property type="match status" value="1"/>
</dbReference>
<dbReference type="Gene3D" id="3.40.50.300">
    <property type="entry name" value="P-loop containing nucleotide triphosphate hydrolases"/>
    <property type="match status" value="3"/>
</dbReference>
<dbReference type="InterPro" id="IPR013986">
    <property type="entry name" value="DExx_box_DNA_helicase_dom_sf"/>
</dbReference>
<dbReference type="InterPro" id="IPR000212">
    <property type="entry name" value="DNA_helicase_UvrD/REP"/>
</dbReference>
<dbReference type="InterPro" id="IPR027417">
    <property type="entry name" value="P-loop_NTPase"/>
</dbReference>
<dbReference type="InterPro" id="IPR014016">
    <property type="entry name" value="UvrD-like_ATP-bd"/>
</dbReference>
<dbReference type="PANTHER" id="PTHR11070:SF3">
    <property type="entry name" value="DNA 3'-5' HELICASE"/>
    <property type="match status" value="1"/>
</dbReference>
<dbReference type="PANTHER" id="PTHR11070">
    <property type="entry name" value="UVRD / RECB / PCRA DNA HELICASE FAMILY MEMBER"/>
    <property type="match status" value="1"/>
</dbReference>
<dbReference type="Pfam" id="PF00580">
    <property type="entry name" value="UvrD-helicase"/>
    <property type="match status" value="1"/>
</dbReference>
<dbReference type="SUPFAM" id="SSF52540">
    <property type="entry name" value="P-loop containing nucleoside triphosphate hydrolases"/>
    <property type="match status" value="1"/>
</dbReference>
<dbReference type="PROSITE" id="PS51198">
    <property type="entry name" value="UVRD_HELICASE_ATP_BIND"/>
    <property type="match status" value="1"/>
</dbReference>
<reference key="1">
    <citation type="submission" date="2012-04" db="EMBL/GenBank/DDBJ databases">
        <title>The Genome Sequence of Bacillus cereus HuB5-5.</title>
        <authorList>
            <consortium name="The Broad Institute Genome Sequencing Platform"/>
            <consortium name="The Broad Institute Genome Sequencing Center for Infectious Disease"/>
            <person name="Feldgarden M."/>
            <person name="Van der Auwera G.A."/>
            <person name="Mahillon J."/>
            <person name="Duprez V."/>
            <person name="Timmery S."/>
            <person name="Mattelet C."/>
            <person name="Dierick K."/>
            <person name="Sun M."/>
            <person name="Yu Z."/>
            <person name="Zhu L."/>
            <person name="Hu X."/>
            <person name="Shank E.B."/>
            <person name="Swiecicka I."/>
            <person name="Hansen B.M."/>
            <person name="Andrup L."/>
            <person name="Young S.K."/>
            <person name="Zeng Q."/>
            <person name="Gargeya S."/>
            <person name="Fitzgerald M."/>
            <person name="Haas B."/>
            <person name="Abouelleil A."/>
            <person name="Alvarado L."/>
            <person name="Arachchi H.M."/>
            <person name="Berlin A."/>
            <person name="Chapman S.B."/>
            <person name="Goldberg J."/>
            <person name="Griggs A."/>
            <person name="Gujja S."/>
            <person name="Hansen M."/>
            <person name="Howarth C."/>
            <person name="Imamovic A."/>
            <person name="Larimer J."/>
            <person name="McCowen C."/>
            <person name="Montmayeur A."/>
            <person name="Murphy C."/>
            <person name="Neiman D."/>
            <person name="Pearson M."/>
            <person name="Priest M."/>
            <person name="Roberts A."/>
            <person name="Saif S."/>
            <person name="Shea T."/>
            <person name="Sisk P."/>
            <person name="Sykes S."/>
            <person name="Wortman J."/>
            <person name="Nusbaum C."/>
            <person name="Birren B."/>
        </authorList>
    </citation>
    <scope>NUCLEOTIDE SEQUENCE [LARGE SCALE GENOMIC DNA]</scope>
    <source>
        <strain>HuB5-5</strain>
    </source>
</reference>
<reference key="2">
    <citation type="journal article" date="2018" name="Science">
        <title>Systematic discovery of antiphage defense systems in the microbial pangenome.</title>
        <authorList>
            <person name="Doron S."/>
            <person name="Melamed S."/>
            <person name="Ofir G."/>
            <person name="Leavitt A."/>
            <person name="Lopatina A."/>
            <person name="Keren M."/>
            <person name="Amitai G."/>
            <person name="Sorek R."/>
        </authorList>
    </citation>
    <scope>FUNCTION</scope>
    <scope>EXPRESSION IN B.SUBTILIS</scope>
    <source>
        <strain>HuB5-5</strain>
    </source>
</reference>
<gene>
    <name evidence="4" type="primary">gajB</name>
    <name type="ORF">IGO_01071</name>
</gene>
<comment type="function">
    <text evidence="3 6">Component of antiviral defense system Gabija type II, composed of GajA and GajB. Expression of Gabija type II in B.subtilis (strain BEST7003) confers resistance to phages phi105, and SpBeta (PubMed:29371424). May be a helicase or contribute to GajA activation (Probable).</text>
</comment>
<comment type="subunit">
    <text evidence="1">Homodimer (By similarity). Interacts with GajA; 2 GajB dimers dock at opposite sides of the GajA complex to form a 4:4 GajA-GajB assembly (GajAB) (By similarity). GajAB interacts with Bacillus phage Phi3T Gad1 protein; this interaction forms a 4:4:8 GajAB-Gad1 complex and leads to GajAB inhibition (By similarity).</text>
</comment>
<comment type="domain">
    <text evidence="1">Contains a UvrD-like helicase domain.</text>
</comment>
<comment type="similarity">
    <text evidence="5">Belongs to the helicase family.</text>
</comment>
<name>GAJB_BACC5</name>
<organism>
    <name type="scientific">Bacillus cereus (strain HuB5-5)</name>
    <dbReference type="NCBI Taxonomy" id="1053212"/>
    <lineage>
        <taxon>Bacteria</taxon>
        <taxon>Bacillati</taxon>
        <taxon>Bacillota</taxon>
        <taxon>Bacilli</taxon>
        <taxon>Bacillales</taxon>
        <taxon>Bacillaceae</taxon>
        <taxon>Bacillus</taxon>
        <taxon>Bacillus cereus group</taxon>
    </lineage>
</organism>